<accession>Q0CF43</accession>
<comment type="function">
    <text evidence="1">ATP-binding RNA helicase involved in the biogenesis of 60S ribosomal subunits and is required for the normal formation of 25S and 5.8S rRNAs.</text>
</comment>
<comment type="catalytic activity">
    <reaction>
        <text>ATP + H2O = ADP + phosphate + H(+)</text>
        <dbReference type="Rhea" id="RHEA:13065"/>
        <dbReference type="ChEBI" id="CHEBI:15377"/>
        <dbReference type="ChEBI" id="CHEBI:15378"/>
        <dbReference type="ChEBI" id="CHEBI:30616"/>
        <dbReference type="ChEBI" id="CHEBI:43474"/>
        <dbReference type="ChEBI" id="CHEBI:456216"/>
        <dbReference type="EC" id="3.6.4.13"/>
    </reaction>
</comment>
<comment type="subcellular location">
    <subcellularLocation>
        <location evidence="1">Nucleus</location>
        <location evidence="1">Nucleolus</location>
    </subcellularLocation>
</comment>
<comment type="domain">
    <text>The Q motif is unique to and characteristic of the DEAD box family of RNA helicases and controls ATP binding and hydrolysis.</text>
</comment>
<comment type="miscellaneous">
    <text>Present with 1460 molecules/cell in log phase SD medium.</text>
</comment>
<comment type="similarity">
    <text evidence="5">Belongs to the DEAD box helicase family. DDX31/DBP7 subfamily.</text>
</comment>
<comment type="sequence caution" evidence="5">
    <conflict type="erroneous gene model prediction">
        <sequence resource="EMBL-CDS" id="EAU31953"/>
    </conflict>
</comment>
<sequence>MADDGMLLNFTFSDDVVKKSEPKLKGGTWRDRLSAKKIAQHRAQPRKPSDGTAAPRPVKNPNRIQVSGTRPAKRQRTDDDHDAGLRDHDRAGQSQHQHQHPRQFISSLFSKNPLPRNAEEPTDEAPAEDAKPTNAPLIDGLDTFTNLGLSPTLAAHLLTKLELKAPTAIQKASISQLLKEESDAFIQAETGSGKTLAYLLPLVQRIMALSHPTNRTDATSTTDAEGQPVVHRDSGLFAIVLAPTRELCKQISVVLEGLLRCAHWIVAGTVIGGEKKKSEKARLRKGLNILVATPGRLADHLENTQALDVSNVRWLVLDEGDRLMELGFEQELQGIIKKLDARQRPSRIPGVPTKRTTILCSATLKMNVQKLGEMSLKDAIHIKADPADEDGDAKPKNDDESAFTVPAQLKQSYAIVAAKLRLVTLTAFLKRTFMRKGSVMKAIVFVSCADSVDFHFEVFTRKLQDSDENAEDSDASDTKEKPAAFTHNTIARATAFSNPSNPVTLHRLHGSLPQHVRTSTLASFARNKDASVLVCTDVASRGLDLPNVDLVIEYDPAFSAEDHLHRIGRTARLGRDGRALIFLQPGCEEGYVEILKRGYRDGGKALTRTNADDILKRGFGGNVESENKDWEEKATDWQMDLERWALEKPESLEMARRAYQSHIRAYATHVASERSMFNIKELHLGHLAKAFALRDRPSKINVPGLRQGKDDTKKDYKAARAPAAGKKRKTPGGRDDDDIPAAADTASAAQKMRAKMKEHMAGASEFNLA</sequence>
<feature type="chain" id="PRO_0000281708" description="ATP-dependent RNA helicase dbp7">
    <location>
        <begin position="1"/>
        <end position="769"/>
    </location>
</feature>
<feature type="domain" description="Helicase ATP-binding" evidence="2">
    <location>
        <begin position="175"/>
        <end position="382"/>
    </location>
</feature>
<feature type="domain" description="Helicase C-terminal" evidence="3">
    <location>
        <begin position="408"/>
        <end position="631"/>
    </location>
</feature>
<feature type="region of interest" description="Disordered" evidence="4">
    <location>
        <begin position="1"/>
        <end position="137"/>
    </location>
</feature>
<feature type="region of interest" description="Disordered" evidence="4">
    <location>
        <begin position="700"/>
        <end position="769"/>
    </location>
</feature>
<feature type="short sequence motif" description="Q motif">
    <location>
        <begin position="142"/>
        <end position="171"/>
    </location>
</feature>
<feature type="short sequence motif" description="DEAD box">
    <location>
        <begin position="318"/>
        <end position="321"/>
    </location>
</feature>
<feature type="compositionally biased region" description="Basic and acidic residues" evidence="4">
    <location>
        <begin position="15"/>
        <end position="34"/>
    </location>
</feature>
<feature type="compositionally biased region" description="Basic and acidic residues" evidence="4">
    <location>
        <begin position="75"/>
        <end position="91"/>
    </location>
</feature>
<feature type="compositionally biased region" description="Basic and acidic residues" evidence="4">
    <location>
        <begin position="707"/>
        <end position="718"/>
    </location>
</feature>
<feature type="compositionally biased region" description="Low complexity" evidence="4">
    <location>
        <begin position="740"/>
        <end position="749"/>
    </location>
</feature>
<feature type="binding site" evidence="2">
    <location>
        <begin position="188"/>
        <end position="195"/>
    </location>
    <ligand>
        <name>ATP</name>
        <dbReference type="ChEBI" id="CHEBI:30616"/>
    </ligand>
</feature>
<proteinExistence type="inferred from homology"/>
<name>DBP7_ASPTN</name>
<protein>
    <recommendedName>
        <fullName>ATP-dependent RNA helicase dbp7</fullName>
        <ecNumber>3.6.4.13</ecNumber>
    </recommendedName>
</protein>
<gene>
    <name type="primary">dbp7</name>
    <name type="ORF">ATEG_07691</name>
</gene>
<dbReference type="EC" id="3.6.4.13"/>
<dbReference type="EMBL" id="CH476604">
    <property type="protein sequence ID" value="EAU31953.1"/>
    <property type="status" value="ALT_SEQ"/>
    <property type="molecule type" value="Genomic_DNA"/>
</dbReference>
<dbReference type="RefSeq" id="XP_001216312.1">
    <property type="nucleotide sequence ID" value="XM_001216312.1"/>
</dbReference>
<dbReference type="SMR" id="Q0CF43"/>
<dbReference type="STRING" id="341663.Q0CF43"/>
<dbReference type="EnsemblFungi" id="EAU31953">
    <property type="protein sequence ID" value="EAU31953"/>
    <property type="gene ID" value="ATEG_07691"/>
</dbReference>
<dbReference type="GeneID" id="4322783"/>
<dbReference type="eggNOG" id="KOG0348">
    <property type="taxonomic scope" value="Eukaryota"/>
</dbReference>
<dbReference type="OrthoDB" id="422663at2759"/>
<dbReference type="Proteomes" id="UP000007963">
    <property type="component" value="Unassembled WGS sequence"/>
</dbReference>
<dbReference type="GO" id="GO:0005730">
    <property type="term" value="C:nucleolus"/>
    <property type="evidence" value="ECO:0007669"/>
    <property type="project" value="UniProtKB-SubCell"/>
</dbReference>
<dbReference type="GO" id="GO:0005524">
    <property type="term" value="F:ATP binding"/>
    <property type="evidence" value="ECO:0007669"/>
    <property type="project" value="UniProtKB-KW"/>
</dbReference>
<dbReference type="GO" id="GO:0016887">
    <property type="term" value="F:ATP hydrolysis activity"/>
    <property type="evidence" value="ECO:0007669"/>
    <property type="project" value="RHEA"/>
</dbReference>
<dbReference type="GO" id="GO:0003723">
    <property type="term" value="F:RNA binding"/>
    <property type="evidence" value="ECO:0007669"/>
    <property type="project" value="UniProtKB-KW"/>
</dbReference>
<dbReference type="GO" id="GO:0003724">
    <property type="term" value="F:RNA helicase activity"/>
    <property type="evidence" value="ECO:0007669"/>
    <property type="project" value="UniProtKB-EC"/>
</dbReference>
<dbReference type="GO" id="GO:0006364">
    <property type="term" value="P:rRNA processing"/>
    <property type="evidence" value="ECO:0007669"/>
    <property type="project" value="UniProtKB-KW"/>
</dbReference>
<dbReference type="CDD" id="cd17949">
    <property type="entry name" value="DEADc_DDX31"/>
    <property type="match status" value="1"/>
</dbReference>
<dbReference type="CDD" id="cd18787">
    <property type="entry name" value="SF2_C_DEAD"/>
    <property type="match status" value="1"/>
</dbReference>
<dbReference type="Gene3D" id="3.40.50.300">
    <property type="entry name" value="P-loop containing nucleotide triphosphate hydrolases"/>
    <property type="match status" value="2"/>
</dbReference>
<dbReference type="InterPro" id="IPR011545">
    <property type="entry name" value="DEAD/DEAH_box_helicase_dom"/>
</dbReference>
<dbReference type="InterPro" id="IPR014001">
    <property type="entry name" value="Helicase_ATP-bd"/>
</dbReference>
<dbReference type="InterPro" id="IPR001650">
    <property type="entry name" value="Helicase_C-like"/>
</dbReference>
<dbReference type="InterPro" id="IPR027417">
    <property type="entry name" value="P-loop_NTPase"/>
</dbReference>
<dbReference type="InterPro" id="IPR025313">
    <property type="entry name" value="SPB4-like_CTE"/>
</dbReference>
<dbReference type="PANTHER" id="PTHR24031">
    <property type="entry name" value="RNA HELICASE"/>
    <property type="match status" value="1"/>
</dbReference>
<dbReference type="Pfam" id="PF13959">
    <property type="entry name" value="CTE_SPB4"/>
    <property type="match status" value="1"/>
</dbReference>
<dbReference type="Pfam" id="PF00270">
    <property type="entry name" value="DEAD"/>
    <property type="match status" value="1"/>
</dbReference>
<dbReference type="Pfam" id="PF00271">
    <property type="entry name" value="Helicase_C"/>
    <property type="match status" value="1"/>
</dbReference>
<dbReference type="SMART" id="SM00487">
    <property type="entry name" value="DEXDc"/>
    <property type="match status" value="1"/>
</dbReference>
<dbReference type="SMART" id="SM01178">
    <property type="entry name" value="DUF4217"/>
    <property type="match status" value="1"/>
</dbReference>
<dbReference type="SMART" id="SM00490">
    <property type="entry name" value="HELICc"/>
    <property type="match status" value="1"/>
</dbReference>
<dbReference type="SUPFAM" id="SSF52540">
    <property type="entry name" value="P-loop containing nucleoside triphosphate hydrolases"/>
    <property type="match status" value="1"/>
</dbReference>
<dbReference type="PROSITE" id="PS51192">
    <property type="entry name" value="HELICASE_ATP_BIND_1"/>
    <property type="match status" value="1"/>
</dbReference>
<dbReference type="PROSITE" id="PS51194">
    <property type="entry name" value="HELICASE_CTER"/>
    <property type="match status" value="1"/>
</dbReference>
<dbReference type="PROSITE" id="PS51195">
    <property type="entry name" value="Q_MOTIF"/>
    <property type="match status" value="1"/>
</dbReference>
<organism>
    <name type="scientific">Aspergillus terreus (strain NIH 2624 / FGSC A1156)</name>
    <dbReference type="NCBI Taxonomy" id="341663"/>
    <lineage>
        <taxon>Eukaryota</taxon>
        <taxon>Fungi</taxon>
        <taxon>Dikarya</taxon>
        <taxon>Ascomycota</taxon>
        <taxon>Pezizomycotina</taxon>
        <taxon>Eurotiomycetes</taxon>
        <taxon>Eurotiomycetidae</taxon>
        <taxon>Eurotiales</taxon>
        <taxon>Aspergillaceae</taxon>
        <taxon>Aspergillus</taxon>
        <taxon>Aspergillus subgen. Circumdati</taxon>
    </lineage>
</organism>
<reference key="1">
    <citation type="submission" date="2005-09" db="EMBL/GenBank/DDBJ databases">
        <title>Annotation of the Aspergillus terreus NIH2624 genome.</title>
        <authorList>
            <person name="Birren B.W."/>
            <person name="Lander E.S."/>
            <person name="Galagan J.E."/>
            <person name="Nusbaum C."/>
            <person name="Devon K."/>
            <person name="Henn M."/>
            <person name="Ma L.-J."/>
            <person name="Jaffe D.B."/>
            <person name="Butler J."/>
            <person name="Alvarez P."/>
            <person name="Gnerre S."/>
            <person name="Grabherr M."/>
            <person name="Kleber M."/>
            <person name="Mauceli E.W."/>
            <person name="Brockman W."/>
            <person name="Rounsley S."/>
            <person name="Young S.K."/>
            <person name="LaButti K."/>
            <person name="Pushparaj V."/>
            <person name="DeCaprio D."/>
            <person name="Crawford M."/>
            <person name="Koehrsen M."/>
            <person name="Engels R."/>
            <person name="Montgomery P."/>
            <person name="Pearson M."/>
            <person name="Howarth C."/>
            <person name="Larson L."/>
            <person name="Luoma S."/>
            <person name="White J."/>
            <person name="Alvarado L."/>
            <person name="Kodira C.D."/>
            <person name="Zeng Q."/>
            <person name="Oleary S."/>
            <person name="Yandava C."/>
            <person name="Denning D.W."/>
            <person name="Nierman W.C."/>
            <person name="Milne T."/>
            <person name="Madden K."/>
        </authorList>
    </citation>
    <scope>NUCLEOTIDE SEQUENCE [LARGE SCALE GENOMIC DNA]</scope>
    <source>
        <strain>NIH 2624 / FGSC A1156</strain>
    </source>
</reference>
<keyword id="KW-0067">ATP-binding</keyword>
<keyword id="KW-0347">Helicase</keyword>
<keyword id="KW-0378">Hydrolase</keyword>
<keyword id="KW-0547">Nucleotide-binding</keyword>
<keyword id="KW-0539">Nucleus</keyword>
<keyword id="KW-1185">Reference proteome</keyword>
<keyword id="KW-0690">Ribosome biogenesis</keyword>
<keyword id="KW-0694">RNA-binding</keyword>
<keyword id="KW-0698">rRNA processing</keyword>
<evidence type="ECO:0000250" key="1"/>
<evidence type="ECO:0000255" key="2">
    <source>
        <dbReference type="PROSITE-ProRule" id="PRU00541"/>
    </source>
</evidence>
<evidence type="ECO:0000255" key="3">
    <source>
        <dbReference type="PROSITE-ProRule" id="PRU00542"/>
    </source>
</evidence>
<evidence type="ECO:0000256" key="4">
    <source>
        <dbReference type="SAM" id="MobiDB-lite"/>
    </source>
</evidence>
<evidence type="ECO:0000305" key="5"/>